<reference key="1">
    <citation type="journal article" date="2007" name="J. Bacteriol.">
        <title>The complete genome sequence of Campylobacter jejuni strain 81116 (NCTC11828).</title>
        <authorList>
            <person name="Pearson B.M."/>
            <person name="Gaskin D.J.H."/>
            <person name="Segers R.P.A.M."/>
            <person name="Wells J.M."/>
            <person name="Nuijten P.J.M."/>
            <person name="van Vliet A.H.M."/>
        </authorList>
    </citation>
    <scope>NUCLEOTIDE SEQUENCE [LARGE SCALE GENOMIC DNA]</scope>
    <source>
        <strain>81116 / NCTC 11828</strain>
    </source>
</reference>
<protein>
    <recommendedName>
        <fullName evidence="1">Acetyl-coenzyme A synthetase</fullName>
        <shortName evidence="1">AcCoA synthetase</shortName>
        <shortName evidence="1">Acs</shortName>
        <ecNumber evidence="1">6.2.1.1</ecNumber>
    </recommendedName>
    <alternativeName>
        <fullName evidence="1">Acetate--CoA ligase</fullName>
    </alternativeName>
    <alternativeName>
        <fullName evidence="1">Acyl-activating enzyme</fullName>
    </alternativeName>
</protein>
<feature type="chain" id="PRO_1000073043" description="Acetyl-coenzyme A synthetase">
    <location>
        <begin position="1"/>
        <end position="657"/>
    </location>
</feature>
<feature type="binding site" evidence="1">
    <location>
        <begin position="192"/>
        <end position="195"/>
    </location>
    <ligand>
        <name>CoA</name>
        <dbReference type="ChEBI" id="CHEBI:57287"/>
    </ligand>
</feature>
<feature type="binding site" evidence="1">
    <location>
        <position position="311"/>
    </location>
    <ligand>
        <name>CoA</name>
        <dbReference type="ChEBI" id="CHEBI:57287"/>
    </ligand>
</feature>
<feature type="binding site" evidence="1">
    <location>
        <begin position="387"/>
        <end position="389"/>
    </location>
    <ligand>
        <name>ATP</name>
        <dbReference type="ChEBI" id="CHEBI:30616"/>
    </ligand>
</feature>
<feature type="binding site" evidence="1">
    <location>
        <begin position="411"/>
        <end position="416"/>
    </location>
    <ligand>
        <name>ATP</name>
        <dbReference type="ChEBI" id="CHEBI:30616"/>
    </ligand>
</feature>
<feature type="binding site" evidence="1">
    <location>
        <position position="504"/>
    </location>
    <ligand>
        <name>ATP</name>
        <dbReference type="ChEBI" id="CHEBI:30616"/>
    </ligand>
</feature>
<feature type="binding site" evidence="1">
    <location>
        <position position="519"/>
    </location>
    <ligand>
        <name>ATP</name>
        <dbReference type="ChEBI" id="CHEBI:30616"/>
    </ligand>
</feature>
<feature type="binding site" evidence="1">
    <location>
        <position position="530"/>
    </location>
    <ligand>
        <name>ATP</name>
        <dbReference type="ChEBI" id="CHEBI:30616"/>
    </ligand>
</feature>
<feature type="binding site" evidence="1">
    <location>
        <position position="543"/>
    </location>
    <ligand>
        <name>Mg(2+)</name>
        <dbReference type="ChEBI" id="CHEBI:18420"/>
    </ligand>
</feature>
<feature type="binding site" evidence="1">
    <location>
        <position position="546"/>
    </location>
    <ligand>
        <name>Mg(2+)</name>
        <dbReference type="ChEBI" id="CHEBI:18420"/>
    </ligand>
</feature>
<feature type="binding site">
    <location>
        <position position="592"/>
    </location>
    <ligand>
        <name>CoA</name>
        <dbReference type="ChEBI" id="CHEBI:57287"/>
    </ligand>
</feature>
<feature type="modified residue" description="N6-acetyllysine" evidence="1">
    <location>
        <position position="617"/>
    </location>
</feature>
<evidence type="ECO:0000255" key="1">
    <source>
        <dbReference type="HAMAP-Rule" id="MF_01123"/>
    </source>
</evidence>
<keyword id="KW-0007">Acetylation</keyword>
<keyword id="KW-0067">ATP-binding</keyword>
<keyword id="KW-0436">Ligase</keyword>
<keyword id="KW-0460">Magnesium</keyword>
<keyword id="KW-0479">Metal-binding</keyword>
<keyword id="KW-0547">Nucleotide-binding</keyword>
<organism>
    <name type="scientific">Campylobacter jejuni subsp. jejuni serotype O:6 (strain 81116 / NCTC 11828)</name>
    <dbReference type="NCBI Taxonomy" id="407148"/>
    <lineage>
        <taxon>Bacteria</taxon>
        <taxon>Pseudomonadati</taxon>
        <taxon>Campylobacterota</taxon>
        <taxon>Epsilonproteobacteria</taxon>
        <taxon>Campylobacterales</taxon>
        <taxon>Campylobacteraceae</taxon>
        <taxon>Campylobacter</taxon>
    </lineage>
</organism>
<gene>
    <name evidence="1" type="primary">acsA</name>
    <name type="ordered locus">C8J_1436</name>
</gene>
<comment type="function">
    <text evidence="1">Catalyzes the conversion of acetate into acetyl-CoA (AcCoA), an essential intermediate at the junction of anabolic and catabolic pathways. AcsA undergoes a two-step reaction. In the first half reaction, AcsA combines acetate with ATP to form acetyl-adenylate (AcAMP) intermediate. In the second half reaction, it can then transfer the acetyl group from AcAMP to the sulfhydryl group of CoA, forming the product AcCoA.</text>
</comment>
<comment type="catalytic activity">
    <reaction evidence="1">
        <text>acetate + ATP + CoA = acetyl-CoA + AMP + diphosphate</text>
        <dbReference type="Rhea" id="RHEA:23176"/>
        <dbReference type="ChEBI" id="CHEBI:30089"/>
        <dbReference type="ChEBI" id="CHEBI:30616"/>
        <dbReference type="ChEBI" id="CHEBI:33019"/>
        <dbReference type="ChEBI" id="CHEBI:57287"/>
        <dbReference type="ChEBI" id="CHEBI:57288"/>
        <dbReference type="ChEBI" id="CHEBI:456215"/>
        <dbReference type="EC" id="6.2.1.1"/>
    </reaction>
</comment>
<comment type="cofactor">
    <cofactor evidence="1">
        <name>Mg(2+)</name>
        <dbReference type="ChEBI" id="CHEBI:18420"/>
    </cofactor>
</comment>
<comment type="PTM">
    <text evidence="1">Acetylated. Deacetylation by the SIR2-homolog deacetylase activates the enzyme.</text>
</comment>
<comment type="similarity">
    <text evidence="1">Belongs to the ATP-dependent AMP-binding enzyme family.</text>
</comment>
<dbReference type="EC" id="6.2.1.1" evidence="1"/>
<dbReference type="EMBL" id="CP000814">
    <property type="protein sequence ID" value="ABV53034.1"/>
    <property type="molecule type" value="Genomic_DNA"/>
</dbReference>
<dbReference type="SMR" id="A8FNJ7"/>
<dbReference type="KEGG" id="cju:C8J_1436"/>
<dbReference type="HOGENOM" id="CLU_000022_3_6_7"/>
<dbReference type="GO" id="GO:0005829">
    <property type="term" value="C:cytosol"/>
    <property type="evidence" value="ECO:0007669"/>
    <property type="project" value="TreeGrafter"/>
</dbReference>
<dbReference type="GO" id="GO:0003987">
    <property type="term" value="F:acetate-CoA ligase activity"/>
    <property type="evidence" value="ECO:0007669"/>
    <property type="project" value="UniProtKB-UniRule"/>
</dbReference>
<dbReference type="GO" id="GO:0016208">
    <property type="term" value="F:AMP binding"/>
    <property type="evidence" value="ECO:0007669"/>
    <property type="project" value="InterPro"/>
</dbReference>
<dbReference type="GO" id="GO:0005524">
    <property type="term" value="F:ATP binding"/>
    <property type="evidence" value="ECO:0007669"/>
    <property type="project" value="UniProtKB-KW"/>
</dbReference>
<dbReference type="GO" id="GO:0046872">
    <property type="term" value="F:metal ion binding"/>
    <property type="evidence" value="ECO:0007669"/>
    <property type="project" value="UniProtKB-KW"/>
</dbReference>
<dbReference type="GO" id="GO:0019427">
    <property type="term" value="P:acetyl-CoA biosynthetic process from acetate"/>
    <property type="evidence" value="ECO:0007669"/>
    <property type="project" value="InterPro"/>
</dbReference>
<dbReference type="CDD" id="cd05966">
    <property type="entry name" value="ACS"/>
    <property type="match status" value="1"/>
</dbReference>
<dbReference type="FunFam" id="3.40.50.12780:FF:000001">
    <property type="entry name" value="Acetyl-coenzyme A synthetase"/>
    <property type="match status" value="1"/>
</dbReference>
<dbReference type="Gene3D" id="3.30.300.30">
    <property type="match status" value="1"/>
</dbReference>
<dbReference type="Gene3D" id="3.40.50.12780">
    <property type="entry name" value="N-terminal domain of ligase-like"/>
    <property type="match status" value="1"/>
</dbReference>
<dbReference type="HAMAP" id="MF_01123">
    <property type="entry name" value="Ac_CoA_synth"/>
    <property type="match status" value="1"/>
</dbReference>
<dbReference type="InterPro" id="IPR011904">
    <property type="entry name" value="Ac_CoA_lig"/>
</dbReference>
<dbReference type="InterPro" id="IPR032387">
    <property type="entry name" value="ACAS_N"/>
</dbReference>
<dbReference type="InterPro" id="IPR025110">
    <property type="entry name" value="AMP-bd_C"/>
</dbReference>
<dbReference type="InterPro" id="IPR045851">
    <property type="entry name" value="AMP-bd_C_sf"/>
</dbReference>
<dbReference type="InterPro" id="IPR020845">
    <property type="entry name" value="AMP-binding_CS"/>
</dbReference>
<dbReference type="InterPro" id="IPR000873">
    <property type="entry name" value="AMP-dep_synth/lig_dom"/>
</dbReference>
<dbReference type="InterPro" id="IPR042099">
    <property type="entry name" value="ANL_N_sf"/>
</dbReference>
<dbReference type="NCBIfam" id="TIGR02188">
    <property type="entry name" value="Ac_CoA_lig_AcsA"/>
    <property type="match status" value="1"/>
</dbReference>
<dbReference type="NCBIfam" id="NF001208">
    <property type="entry name" value="PRK00174.1"/>
    <property type="match status" value="1"/>
</dbReference>
<dbReference type="PANTHER" id="PTHR24095">
    <property type="entry name" value="ACETYL-COENZYME A SYNTHETASE"/>
    <property type="match status" value="1"/>
</dbReference>
<dbReference type="PANTHER" id="PTHR24095:SF14">
    <property type="entry name" value="ACETYL-COENZYME A SYNTHETASE 1"/>
    <property type="match status" value="1"/>
</dbReference>
<dbReference type="Pfam" id="PF16177">
    <property type="entry name" value="ACAS_N"/>
    <property type="match status" value="1"/>
</dbReference>
<dbReference type="Pfam" id="PF00501">
    <property type="entry name" value="AMP-binding"/>
    <property type="match status" value="1"/>
</dbReference>
<dbReference type="Pfam" id="PF13193">
    <property type="entry name" value="AMP-binding_C"/>
    <property type="match status" value="1"/>
</dbReference>
<dbReference type="SUPFAM" id="SSF56801">
    <property type="entry name" value="Acetyl-CoA synthetase-like"/>
    <property type="match status" value="1"/>
</dbReference>
<dbReference type="PROSITE" id="PS00455">
    <property type="entry name" value="AMP_BINDING"/>
    <property type="match status" value="1"/>
</dbReference>
<proteinExistence type="inferred from homology"/>
<sequence length="657" mass="73824">MLNQNNQELFKPSKEFSRNARIKNLCEYYDLCDEAKEDFEGFWKRQALEKIEWFSPFSRVLNEDKAPFYKWFEGGTLNVSYQCLDRHMKTRRNKAALIFEGEMGDYEVYTYRRLLHETCKAANLLKKFGVKKGDRVVIYMPMIPETAIVMLACARIGAIHSVVFGGFSPEALRDRIIDAGAKLVVTADGAFRRGKPYMLKPAVDKALSEGCESVEKVLIVIRNNEPIEYIKGRDYVYNELVKNESYKCEPEIMDSEDLLFLLYTSGSTGKPKGVMHASAGYILWAQMTMEWVFDIKDYDNYWCSADVGWITGHTYVVYGPLACGATTIMHEGTPTYPNSGRWWRMIEEYQISKFYTSPTAIRMLHADAPDEPRKYDLSTLEVLGTVGEPINPSAWKWFYDEIGGTKSPIVDTWWQTETGGHMITPLPGATPLKPGCATLPLPGIFAEVIDEEGNKKDEGEDGLLCITKPWPSMIRGIWGNDERYIESYFSQAKKDGKAVYFSGDGAFYDKNGYITITGRTDDVVNVAGHRIGTAEIESAIAKHPSVAESAVVSILDAIKGESLFAFVVLSPASSCDLGGAIETLKELNDILRVEIGPIAKIEKILYTPGLPKTRSGKIMRRILRTIARGEEIKQDISTLEDSGVVETIVKLAKAEFE</sequence>
<accession>A8FNJ7</accession>
<name>ACSA_CAMJ8</name>